<name>DCAKD_BOVIN</name>
<evidence type="ECO:0000255" key="1"/>
<evidence type="ECO:0000303" key="2">
    <source ref="1"/>
</evidence>
<evidence type="ECO:0000305" key="3"/>
<reference key="1">
    <citation type="submission" date="2005-08" db="EMBL/GenBank/DDBJ databases">
        <title>Bovine genome sequencing program: full-length cDNA sequencing.</title>
        <authorList>
            <person name="Moore S."/>
            <person name="Alexander L."/>
            <person name="Brownstein M."/>
            <person name="Guan L."/>
            <person name="Lobo S."/>
            <person name="Meng Y."/>
            <person name="Tanaguchi M."/>
            <person name="Wang Z."/>
            <person name="Yu J."/>
            <person name="Prange C."/>
            <person name="Schreiber K."/>
            <person name="Shenmen C."/>
            <person name="Wagner L."/>
            <person name="Bala M."/>
            <person name="Barbazuk S."/>
            <person name="Barber S."/>
            <person name="Babakaiff R."/>
            <person name="Beland J."/>
            <person name="Chun E."/>
            <person name="Del Rio L."/>
            <person name="Gibson S."/>
            <person name="Hanson R."/>
            <person name="Kirkpatrick R."/>
            <person name="Liu J."/>
            <person name="Matsuo C."/>
            <person name="Mayo M."/>
            <person name="Santos R.R."/>
            <person name="Stott J."/>
            <person name="Tsai M."/>
            <person name="Wong D."/>
            <person name="Siddiqui A."/>
            <person name="Holt R."/>
            <person name="Jones S.J."/>
            <person name="Marra M.A."/>
        </authorList>
    </citation>
    <scope>NUCLEOTIDE SEQUENCE [LARGE SCALE MRNA] (ISOFORMS 1 AND 2)</scope>
    <source>
        <strain>Hereford</strain>
        <tissue>Hypothalamus</tissue>
    </source>
</reference>
<dbReference type="EMBL" id="DV815527">
    <property type="status" value="NOT_ANNOTATED_CDS"/>
    <property type="molecule type" value="mRNA"/>
</dbReference>
<dbReference type="EMBL" id="BC103143">
    <property type="protein sequence ID" value="AAI03144.1"/>
    <property type="molecule type" value="mRNA"/>
</dbReference>
<dbReference type="RefSeq" id="NP_001071349.1">
    <property type="nucleotide sequence ID" value="NM_001077881.1"/>
</dbReference>
<dbReference type="RefSeq" id="XP_005220892.1">
    <property type="nucleotide sequence ID" value="XM_005220835.3"/>
</dbReference>
<dbReference type="SMR" id="Q3ZBS0"/>
<dbReference type="FunCoup" id="Q3ZBS0">
    <property type="interactions" value="1729"/>
</dbReference>
<dbReference type="STRING" id="9913.ENSBTAP00000007945"/>
<dbReference type="PaxDb" id="9913-ENSBTAP00000007945"/>
<dbReference type="KEGG" id="bta:508778"/>
<dbReference type="CTD" id="79877"/>
<dbReference type="eggNOG" id="KOG3220">
    <property type="taxonomic scope" value="Eukaryota"/>
</dbReference>
<dbReference type="HOGENOM" id="CLU_057180_0_0_1"/>
<dbReference type="InParanoid" id="Q3ZBS0"/>
<dbReference type="OrthoDB" id="247245at2759"/>
<dbReference type="TreeFam" id="TF314815"/>
<dbReference type="Proteomes" id="UP000009136">
    <property type="component" value="Unplaced"/>
</dbReference>
<dbReference type="GO" id="GO:0005524">
    <property type="term" value="F:ATP binding"/>
    <property type="evidence" value="ECO:0007669"/>
    <property type="project" value="UniProtKB-KW"/>
</dbReference>
<dbReference type="GO" id="GO:0004140">
    <property type="term" value="F:dephospho-CoA kinase activity"/>
    <property type="evidence" value="ECO:0000318"/>
    <property type="project" value="GO_Central"/>
</dbReference>
<dbReference type="GO" id="GO:0015937">
    <property type="term" value="P:coenzyme A biosynthetic process"/>
    <property type="evidence" value="ECO:0000318"/>
    <property type="project" value="GO_Central"/>
</dbReference>
<dbReference type="CDD" id="cd02022">
    <property type="entry name" value="DPCK"/>
    <property type="match status" value="1"/>
</dbReference>
<dbReference type="FunFam" id="3.40.50.300:FF:000485">
    <property type="entry name" value="Dephospho-CoA kinase CAB5"/>
    <property type="match status" value="1"/>
</dbReference>
<dbReference type="Gene3D" id="3.40.50.300">
    <property type="entry name" value="P-loop containing nucleotide triphosphate hydrolases"/>
    <property type="match status" value="1"/>
</dbReference>
<dbReference type="HAMAP" id="MF_00376">
    <property type="entry name" value="Dephospho_CoA_kinase"/>
    <property type="match status" value="1"/>
</dbReference>
<dbReference type="InterPro" id="IPR001977">
    <property type="entry name" value="Depp_CoAkinase"/>
</dbReference>
<dbReference type="InterPro" id="IPR027417">
    <property type="entry name" value="P-loop_NTPase"/>
</dbReference>
<dbReference type="NCBIfam" id="TIGR00152">
    <property type="entry name" value="dephospho-CoA kinase"/>
    <property type="match status" value="1"/>
</dbReference>
<dbReference type="PANTHER" id="PTHR10695:SF46">
    <property type="entry name" value="BIFUNCTIONAL COENZYME A SYNTHASE-RELATED"/>
    <property type="match status" value="1"/>
</dbReference>
<dbReference type="PANTHER" id="PTHR10695">
    <property type="entry name" value="DEPHOSPHO-COA KINASE-RELATED"/>
    <property type="match status" value="1"/>
</dbReference>
<dbReference type="Pfam" id="PF01121">
    <property type="entry name" value="CoaE"/>
    <property type="match status" value="1"/>
</dbReference>
<dbReference type="SUPFAM" id="SSF52540">
    <property type="entry name" value="P-loop containing nucleoside triphosphate hydrolases"/>
    <property type="match status" value="1"/>
</dbReference>
<dbReference type="PROSITE" id="PS51219">
    <property type="entry name" value="DPCK"/>
    <property type="match status" value="1"/>
</dbReference>
<comment type="alternative products">
    <event type="alternative splicing"/>
    <isoform>
        <id>Q3ZBS0-1</id>
        <name>1</name>
        <sequence type="displayed"/>
    </isoform>
    <isoform>
        <id>Q3ZBS0-2</id>
        <name>2</name>
        <sequence type="described" ref="VSP_030808 VSP_030809"/>
    </isoform>
</comment>
<comment type="similarity">
    <text evidence="3">Belongs to the CoaE family.</text>
</comment>
<keyword id="KW-0025">Alternative splicing</keyword>
<keyword id="KW-0067">ATP-binding</keyword>
<keyword id="KW-0547">Nucleotide-binding</keyword>
<keyword id="KW-1185">Reference proteome</keyword>
<proteinExistence type="evidence at transcript level"/>
<organism>
    <name type="scientific">Bos taurus</name>
    <name type="common">Bovine</name>
    <dbReference type="NCBI Taxonomy" id="9913"/>
    <lineage>
        <taxon>Eukaryota</taxon>
        <taxon>Metazoa</taxon>
        <taxon>Chordata</taxon>
        <taxon>Craniata</taxon>
        <taxon>Vertebrata</taxon>
        <taxon>Euteleostomi</taxon>
        <taxon>Mammalia</taxon>
        <taxon>Eutheria</taxon>
        <taxon>Laurasiatheria</taxon>
        <taxon>Artiodactyla</taxon>
        <taxon>Ruminantia</taxon>
        <taxon>Pecora</taxon>
        <taxon>Bovidae</taxon>
        <taxon>Bovinae</taxon>
        <taxon>Bos</taxon>
    </lineage>
</organism>
<gene>
    <name type="primary">DCAKD</name>
</gene>
<protein>
    <recommendedName>
        <fullName>Dephospho-CoA kinase domain-containing protein</fullName>
    </recommendedName>
</protein>
<feature type="chain" id="PRO_0000316848" description="Dephospho-CoA kinase domain-containing protein">
    <location>
        <begin position="1"/>
        <end position="231"/>
    </location>
</feature>
<feature type="domain" description="DPCK">
    <location>
        <begin position="3"/>
        <end position="207"/>
    </location>
</feature>
<feature type="binding site" evidence="1">
    <location>
        <begin position="8"/>
        <end position="15"/>
    </location>
    <ligand>
        <name>ATP</name>
        <dbReference type="ChEBI" id="CHEBI:30616"/>
    </ligand>
</feature>
<feature type="splice variant" id="VSP_030808" description="In isoform 2." evidence="2">
    <original>C</original>
    <variation>W</variation>
    <location>
        <position position="135"/>
    </location>
</feature>
<feature type="splice variant" id="VSP_030809" description="In isoform 2." evidence="2">
    <location>
        <begin position="136"/>
        <end position="231"/>
    </location>
</feature>
<sequence>MFLVGLTGGIASGKSSVIQVFQQLGCAVIDVDIIARHIVQPGYPAHRRIVEAFGTEVLLENGDIDRKVLGDLIFNQPDRRHLLNSITHPEICKEMMKETFKYFLRGYRYVILDIPLLFETKKLLKYMKHTVVVYCDRDTQLARLMRRNNLSREDAEARIKAQLPLKDKARMARHVLDNSGEWSVTKRQVVLLHAELEHSLEYLPLRLGVLTGLAGIVGLLYLLTHYLLPSP</sequence>
<accession>Q3ZBS0</accession>